<protein>
    <recommendedName>
        <fullName evidence="1">UDP-N-acetylglucosamine--N-acetylmuramyl-(pentapeptide) pyrophosphoryl-undecaprenol N-acetylglucosamine transferase</fullName>
        <ecNumber evidence="1">2.4.1.227</ecNumber>
    </recommendedName>
    <alternativeName>
        <fullName evidence="1">Undecaprenyl-PP-MurNAc-pentapeptide-UDPGlcNAc GlcNAc transferase</fullName>
    </alternativeName>
</protein>
<reference key="1">
    <citation type="journal article" date="2005" name="Arch. Microbiol.">
        <title>The genome sequence of an anaerobic aromatic-degrading denitrifying bacterium, strain EbN1.</title>
        <authorList>
            <person name="Rabus R."/>
            <person name="Kube M."/>
            <person name="Heider J."/>
            <person name="Beck A."/>
            <person name="Heitmann K."/>
            <person name="Widdel F."/>
            <person name="Reinhardt R."/>
        </authorList>
    </citation>
    <scope>NUCLEOTIDE SEQUENCE [LARGE SCALE GENOMIC DNA]</scope>
    <source>
        <strain>DSM 19018 / LMG 30748 / EbN1</strain>
    </source>
</reference>
<gene>
    <name evidence="1" type="primary">murG</name>
    <name type="ordered locus">AZOSEA07920</name>
    <name type="ORF">ebA1444</name>
</gene>
<feature type="chain" id="PRO_0000225020" description="UDP-N-acetylglucosamine--N-acetylmuramyl-(pentapeptide) pyrophosphoryl-undecaprenol N-acetylglucosamine transferase">
    <location>
        <begin position="1"/>
        <end position="357"/>
    </location>
</feature>
<feature type="binding site" evidence="1">
    <location>
        <begin position="11"/>
        <end position="13"/>
    </location>
    <ligand>
        <name>UDP-N-acetyl-alpha-D-glucosamine</name>
        <dbReference type="ChEBI" id="CHEBI:57705"/>
    </ligand>
</feature>
<feature type="binding site" evidence="1">
    <location>
        <position position="123"/>
    </location>
    <ligand>
        <name>UDP-N-acetyl-alpha-D-glucosamine</name>
        <dbReference type="ChEBI" id="CHEBI:57705"/>
    </ligand>
</feature>
<feature type="binding site" evidence="1">
    <location>
        <position position="159"/>
    </location>
    <ligand>
        <name>UDP-N-acetyl-alpha-D-glucosamine</name>
        <dbReference type="ChEBI" id="CHEBI:57705"/>
    </ligand>
</feature>
<feature type="binding site" evidence="1">
    <location>
        <position position="187"/>
    </location>
    <ligand>
        <name>UDP-N-acetyl-alpha-D-glucosamine</name>
        <dbReference type="ChEBI" id="CHEBI:57705"/>
    </ligand>
</feature>
<feature type="binding site" evidence="1">
    <location>
        <position position="241"/>
    </location>
    <ligand>
        <name>UDP-N-acetyl-alpha-D-glucosamine</name>
        <dbReference type="ChEBI" id="CHEBI:57705"/>
    </ligand>
</feature>
<feature type="binding site" evidence="1">
    <location>
        <begin position="260"/>
        <end position="265"/>
    </location>
    <ligand>
        <name>UDP-N-acetyl-alpha-D-glucosamine</name>
        <dbReference type="ChEBI" id="CHEBI:57705"/>
    </ligand>
</feature>
<feature type="binding site" evidence="1">
    <location>
        <position position="286"/>
    </location>
    <ligand>
        <name>UDP-N-acetyl-alpha-D-glucosamine</name>
        <dbReference type="ChEBI" id="CHEBI:57705"/>
    </ligand>
</feature>
<proteinExistence type="inferred from homology"/>
<sequence>MKTLLVMAGGTGGHIFPGVAVAEQLRGRGWRIVWMGNPDGMEARIVPQHGYETAWVHFGALRGKGLLRKLLLPLNLLRGFWQALGELRRIRPDVVLGMGGYVTFPGGMMAALLGRPLVVHEQNSVAGLANRVLAGVADRVLSGFPHTLKKAGWVGNPVRADIAAVAPPDARFAGRSGPLKLLVVGGSLGAAVLNDTVPKALARIDKAQRPIVTHQAGAKQLEALRAAYAEAGVEGELLPFIDDMASRYAEADLVVCRAGALTVAELAAVGAASLLVPFPHAVDDHQTGNAQFLADRGAAYLLPQPQLDAERLAGIIESLARDHLLDMATKARALAKPRAAEAVAQVCEELAAGRKKK</sequence>
<comment type="function">
    <text evidence="1">Cell wall formation. Catalyzes the transfer of a GlcNAc subunit on undecaprenyl-pyrophosphoryl-MurNAc-pentapeptide (lipid intermediate I) to form undecaprenyl-pyrophosphoryl-MurNAc-(pentapeptide)GlcNAc (lipid intermediate II).</text>
</comment>
<comment type="catalytic activity">
    <reaction evidence="1">
        <text>di-trans,octa-cis-undecaprenyl diphospho-N-acetyl-alpha-D-muramoyl-L-alanyl-D-glutamyl-meso-2,6-diaminopimeloyl-D-alanyl-D-alanine + UDP-N-acetyl-alpha-D-glucosamine = di-trans,octa-cis-undecaprenyl diphospho-[N-acetyl-alpha-D-glucosaminyl-(1-&gt;4)]-N-acetyl-alpha-D-muramoyl-L-alanyl-D-glutamyl-meso-2,6-diaminopimeloyl-D-alanyl-D-alanine + UDP + H(+)</text>
        <dbReference type="Rhea" id="RHEA:31227"/>
        <dbReference type="ChEBI" id="CHEBI:15378"/>
        <dbReference type="ChEBI" id="CHEBI:57705"/>
        <dbReference type="ChEBI" id="CHEBI:58223"/>
        <dbReference type="ChEBI" id="CHEBI:61387"/>
        <dbReference type="ChEBI" id="CHEBI:61388"/>
        <dbReference type="EC" id="2.4.1.227"/>
    </reaction>
</comment>
<comment type="pathway">
    <text evidence="1">Cell wall biogenesis; peptidoglycan biosynthesis.</text>
</comment>
<comment type="subcellular location">
    <subcellularLocation>
        <location evidence="1">Cell inner membrane</location>
        <topology evidence="1">Peripheral membrane protein</topology>
        <orientation evidence="1">Cytoplasmic side</orientation>
    </subcellularLocation>
</comment>
<comment type="similarity">
    <text evidence="1">Belongs to the glycosyltransferase 28 family. MurG subfamily.</text>
</comment>
<name>MURG_AROAE</name>
<keyword id="KW-0131">Cell cycle</keyword>
<keyword id="KW-0132">Cell division</keyword>
<keyword id="KW-0997">Cell inner membrane</keyword>
<keyword id="KW-1003">Cell membrane</keyword>
<keyword id="KW-0133">Cell shape</keyword>
<keyword id="KW-0961">Cell wall biogenesis/degradation</keyword>
<keyword id="KW-0328">Glycosyltransferase</keyword>
<keyword id="KW-0472">Membrane</keyword>
<keyword id="KW-0573">Peptidoglycan synthesis</keyword>
<keyword id="KW-1185">Reference proteome</keyword>
<keyword id="KW-0808">Transferase</keyword>
<dbReference type="EC" id="2.4.1.227" evidence="1"/>
<dbReference type="EMBL" id="CR555306">
    <property type="protein sequence ID" value="CAI06915.1"/>
    <property type="molecule type" value="Genomic_DNA"/>
</dbReference>
<dbReference type="RefSeq" id="WP_011236643.1">
    <property type="nucleotide sequence ID" value="NC_006513.1"/>
</dbReference>
<dbReference type="SMR" id="Q5P6Z6"/>
<dbReference type="STRING" id="76114.ebA1444"/>
<dbReference type="CAZy" id="GT28">
    <property type="family name" value="Glycosyltransferase Family 28"/>
</dbReference>
<dbReference type="KEGG" id="eba:ebA1444"/>
<dbReference type="eggNOG" id="COG0707">
    <property type="taxonomic scope" value="Bacteria"/>
</dbReference>
<dbReference type="HOGENOM" id="CLU_037404_2_0_4"/>
<dbReference type="OrthoDB" id="9808936at2"/>
<dbReference type="UniPathway" id="UPA00219"/>
<dbReference type="Proteomes" id="UP000006552">
    <property type="component" value="Chromosome"/>
</dbReference>
<dbReference type="GO" id="GO:0005886">
    <property type="term" value="C:plasma membrane"/>
    <property type="evidence" value="ECO:0007669"/>
    <property type="project" value="UniProtKB-SubCell"/>
</dbReference>
<dbReference type="GO" id="GO:0051991">
    <property type="term" value="F:UDP-N-acetyl-D-glucosamine:N-acetylmuramoyl-L-alanyl-D-glutamyl-meso-2,6-diaminopimelyl-D-alanyl-D-alanine-diphosphoundecaprenol 4-beta-N-acetylglucosaminlytransferase activity"/>
    <property type="evidence" value="ECO:0007669"/>
    <property type="project" value="RHEA"/>
</dbReference>
<dbReference type="GO" id="GO:0050511">
    <property type="term" value="F:undecaprenyldiphospho-muramoylpentapeptide beta-N-acetylglucosaminyltransferase activity"/>
    <property type="evidence" value="ECO:0007669"/>
    <property type="project" value="UniProtKB-UniRule"/>
</dbReference>
<dbReference type="GO" id="GO:0005975">
    <property type="term" value="P:carbohydrate metabolic process"/>
    <property type="evidence" value="ECO:0007669"/>
    <property type="project" value="InterPro"/>
</dbReference>
<dbReference type="GO" id="GO:0051301">
    <property type="term" value="P:cell division"/>
    <property type="evidence" value="ECO:0007669"/>
    <property type="project" value="UniProtKB-KW"/>
</dbReference>
<dbReference type="GO" id="GO:0071555">
    <property type="term" value="P:cell wall organization"/>
    <property type="evidence" value="ECO:0007669"/>
    <property type="project" value="UniProtKB-KW"/>
</dbReference>
<dbReference type="GO" id="GO:0030259">
    <property type="term" value="P:lipid glycosylation"/>
    <property type="evidence" value="ECO:0007669"/>
    <property type="project" value="UniProtKB-UniRule"/>
</dbReference>
<dbReference type="GO" id="GO:0009252">
    <property type="term" value="P:peptidoglycan biosynthetic process"/>
    <property type="evidence" value="ECO:0007669"/>
    <property type="project" value="UniProtKB-UniRule"/>
</dbReference>
<dbReference type="GO" id="GO:0008360">
    <property type="term" value="P:regulation of cell shape"/>
    <property type="evidence" value="ECO:0007669"/>
    <property type="project" value="UniProtKB-KW"/>
</dbReference>
<dbReference type="CDD" id="cd03785">
    <property type="entry name" value="GT28_MurG"/>
    <property type="match status" value="1"/>
</dbReference>
<dbReference type="Gene3D" id="3.40.50.2000">
    <property type="entry name" value="Glycogen Phosphorylase B"/>
    <property type="match status" value="2"/>
</dbReference>
<dbReference type="HAMAP" id="MF_00033">
    <property type="entry name" value="MurG"/>
    <property type="match status" value="1"/>
</dbReference>
<dbReference type="InterPro" id="IPR006009">
    <property type="entry name" value="GlcNAc_MurG"/>
</dbReference>
<dbReference type="InterPro" id="IPR007235">
    <property type="entry name" value="Glyco_trans_28_C"/>
</dbReference>
<dbReference type="InterPro" id="IPR004276">
    <property type="entry name" value="GlycoTrans_28_N"/>
</dbReference>
<dbReference type="NCBIfam" id="TIGR01133">
    <property type="entry name" value="murG"/>
    <property type="match status" value="1"/>
</dbReference>
<dbReference type="PANTHER" id="PTHR21015:SF22">
    <property type="entry name" value="GLYCOSYLTRANSFERASE"/>
    <property type="match status" value="1"/>
</dbReference>
<dbReference type="PANTHER" id="PTHR21015">
    <property type="entry name" value="UDP-N-ACETYLGLUCOSAMINE--N-ACETYLMURAMYL-(PENTAPEPTIDE) PYROPHOSPHORYL-UNDECAPRENOL N-ACETYLGLUCOSAMINE TRANSFERASE 1"/>
    <property type="match status" value="1"/>
</dbReference>
<dbReference type="Pfam" id="PF04101">
    <property type="entry name" value="Glyco_tran_28_C"/>
    <property type="match status" value="1"/>
</dbReference>
<dbReference type="Pfam" id="PF03033">
    <property type="entry name" value="Glyco_transf_28"/>
    <property type="match status" value="1"/>
</dbReference>
<dbReference type="SUPFAM" id="SSF53756">
    <property type="entry name" value="UDP-Glycosyltransferase/glycogen phosphorylase"/>
    <property type="match status" value="1"/>
</dbReference>
<organism>
    <name type="scientific">Aromatoleum aromaticum (strain DSM 19018 / LMG 30748 / EbN1)</name>
    <name type="common">Azoarcus sp. (strain EbN1)</name>
    <dbReference type="NCBI Taxonomy" id="76114"/>
    <lineage>
        <taxon>Bacteria</taxon>
        <taxon>Pseudomonadati</taxon>
        <taxon>Pseudomonadota</taxon>
        <taxon>Betaproteobacteria</taxon>
        <taxon>Rhodocyclales</taxon>
        <taxon>Rhodocyclaceae</taxon>
        <taxon>Aromatoleum</taxon>
    </lineage>
</organism>
<accession>Q5P6Z6</accession>
<evidence type="ECO:0000255" key="1">
    <source>
        <dbReference type="HAMAP-Rule" id="MF_00033"/>
    </source>
</evidence>